<protein>
    <recommendedName>
        <fullName evidence="1">Gamma-glutamyl phosphate reductase</fullName>
        <shortName evidence="1">GPR</shortName>
        <ecNumber evidence="1">1.2.1.41</ecNumber>
    </recommendedName>
    <alternativeName>
        <fullName evidence="1">Glutamate-5-semialdehyde dehydrogenase</fullName>
    </alternativeName>
    <alternativeName>
        <fullName evidence="1">Glutamyl-gamma-semialdehyde dehydrogenase</fullName>
        <shortName evidence="1">GSA dehydrogenase</shortName>
    </alternativeName>
</protein>
<reference key="1">
    <citation type="journal article" date="2004" name="Nat. Biotechnol.">
        <title>Complete genome sequence of the metabolically versatile photosynthetic bacterium Rhodopseudomonas palustris.</title>
        <authorList>
            <person name="Larimer F.W."/>
            <person name="Chain P."/>
            <person name="Hauser L."/>
            <person name="Lamerdin J.E."/>
            <person name="Malfatti S."/>
            <person name="Do L."/>
            <person name="Land M.L."/>
            <person name="Pelletier D.A."/>
            <person name="Beatty J.T."/>
            <person name="Lang A.S."/>
            <person name="Tabita F.R."/>
            <person name="Gibson J.L."/>
            <person name="Hanson T.E."/>
            <person name="Bobst C."/>
            <person name="Torres y Torres J.L."/>
            <person name="Peres C."/>
            <person name="Harrison F.H."/>
            <person name="Gibson J."/>
            <person name="Harwood C.S."/>
        </authorList>
    </citation>
    <scope>NUCLEOTIDE SEQUENCE [LARGE SCALE GENOMIC DNA]</scope>
    <source>
        <strain>ATCC BAA-98 / CGA009</strain>
    </source>
</reference>
<dbReference type="EC" id="1.2.1.41" evidence="1"/>
<dbReference type="EMBL" id="BX572593">
    <property type="protein sequence ID" value="CAE25608.1"/>
    <property type="molecule type" value="Genomic_DNA"/>
</dbReference>
<dbReference type="RefSeq" id="WP_011155732.1">
    <property type="nucleotide sequence ID" value="NZ_CP116810.1"/>
</dbReference>
<dbReference type="SMR" id="Q6NDE4"/>
<dbReference type="STRING" id="258594.RPA0164"/>
<dbReference type="GeneID" id="66891169"/>
<dbReference type="eggNOG" id="COG0014">
    <property type="taxonomic scope" value="Bacteria"/>
</dbReference>
<dbReference type="HOGENOM" id="CLU_030231_0_0_5"/>
<dbReference type="PhylomeDB" id="Q6NDE4"/>
<dbReference type="UniPathway" id="UPA00098">
    <property type="reaction ID" value="UER00360"/>
</dbReference>
<dbReference type="GO" id="GO:0005737">
    <property type="term" value="C:cytoplasm"/>
    <property type="evidence" value="ECO:0007669"/>
    <property type="project" value="UniProtKB-SubCell"/>
</dbReference>
<dbReference type="GO" id="GO:0004350">
    <property type="term" value="F:glutamate-5-semialdehyde dehydrogenase activity"/>
    <property type="evidence" value="ECO:0007669"/>
    <property type="project" value="UniProtKB-UniRule"/>
</dbReference>
<dbReference type="GO" id="GO:0050661">
    <property type="term" value="F:NADP binding"/>
    <property type="evidence" value="ECO:0007669"/>
    <property type="project" value="InterPro"/>
</dbReference>
<dbReference type="GO" id="GO:0055129">
    <property type="term" value="P:L-proline biosynthetic process"/>
    <property type="evidence" value="ECO:0007669"/>
    <property type="project" value="UniProtKB-UniRule"/>
</dbReference>
<dbReference type="CDD" id="cd07079">
    <property type="entry name" value="ALDH_F18-19_ProA-GPR"/>
    <property type="match status" value="1"/>
</dbReference>
<dbReference type="FunFam" id="3.40.309.10:FF:000006">
    <property type="entry name" value="Gamma-glutamyl phosphate reductase"/>
    <property type="match status" value="1"/>
</dbReference>
<dbReference type="Gene3D" id="3.40.605.10">
    <property type="entry name" value="Aldehyde Dehydrogenase, Chain A, domain 1"/>
    <property type="match status" value="1"/>
</dbReference>
<dbReference type="Gene3D" id="3.40.309.10">
    <property type="entry name" value="Aldehyde Dehydrogenase, Chain A, domain 2"/>
    <property type="match status" value="1"/>
</dbReference>
<dbReference type="HAMAP" id="MF_00412">
    <property type="entry name" value="ProA"/>
    <property type="match status" value="1"/>
</dbReference>
<dbReference type="InterPro" id="IPR016161">
    <property type="entry name" value="Ald_DH/histidinol_DH"/>
</dbReference>
<dbReference type="InterPro" id="IPR016163">
    <property type="entry name" value="Ald_DH_C"/>
</dbReference>
<dbReference type="InterPro" id="IPR016162">
    <property type="entry name" value="Ald_DH_N"/>
</dbReference>
<dbReference type="InterPro" id="IPR015590">
    <property type="entry name" value="Aldehyde_DH_dom"/>
</dbReference>
<dbReference type="InterPro" id="IPR020593">
    <property type="entry name" value="G-glutamylP_reductase_CS"/>
</dbReference>
<dbReference type="InterPro" id="IPR012134">
    <property type="entry name" value="Glu-5-SA_DH"/>
</dbReference>
<dbReference type="InterPro" id="IPR000965">
    <property type="entry name" value="GPR_dom"/>
</dbReference>
<dbReference type="NCBIfam" id="NF001221">
    <property type="entry name" value="PRK00197.1"/>
    <property type="match status" value="1"/>
</dbReference>
<dbReference type="NCBIfam" id="TIGR00407">
    <property type="entry name" value="proA"/>
    <property type="match status" value="1"/>
</dbReference>
<dbReference type="PANTHER" id="PTHR11063:SF8">
    <property type="entry name" value="DELTA-1-PYRROLINE-5-CARBOXYLATE SYNTHASE"/>
    <property type="match status" value="1"/>
</dbReference>
<dbReference type="PANTHER" id="PTHR11063">
    <property type="entry name" value="GLUTAMATE SEMIALDEHYDE DEHYDROGENASE"/>
    <property type="match status" value="1"/>
</dbReference>
<dbReference type="Pfam" id="PF00171">
    <property type="entry name" value="Aldedh"/>
    <property type="match status" value="1"/>
</dbReference>
<dbReference type="PIRSF" id="PIRSF000151">
    <property type="entry name" value="GPR"/>
    <property type="match status" value="1"/>
</dbReference>
<dbReference type="SUPFAM" id="SSF53720">
    <property type="entry name" value="ALDH-like"/>
    <property type="match status" value="1"/>
</dbReference>
<dbReference type="PROSITE" id="PS01223">
    <property type="entry name" value="PROA"/>
    <property type="match status" value="1"/>
</dbReference>
<evidence type="ECO:0000255" key="1">
    <source>
        <dbReference type="HAMAP-Rule" id="MF_00412"/>
    </source>
</evidence>
<feature type="chain" id="PRO_0000189774" description="Gamma-glutamyl phosphate reductase">
    <location>
        <begin position="1"/>
        <end position="430"/>
    </location>
</feature>
<proteinExistence type="inferred from homology"/>
<comment type="function">
    <text evidence="1">Catalyzes the NADPH-dependent reduction of L-glutamate 5-phosphate into L-glutamate 5-semialdehyde and phosphate. The product spontaneously undergoes cyclization to form 1-pyrroline-5-carboxylate.</text>
</comment>
<comment type="catalytic activity">
    <reaction evidence="1">
        <text>L-glutamate 5-semialdehyde + phosphate + NADP(+) = L-glutamyl 5-phosphate + NADPH + H(+)</text>
        <dbReference type="Rhea" id="RHEA:19541"/>
        <dbReference type="ChEBI" id="CHEBI:15378"/>
        <dbReference type="ChEBI" id="CHEBI:43474"/>
        <dbReference type="ChEBI" id="CHEBI:57783"/>
        <dbReference type="ChEBI" id="CHEBI:58066"/>
        <dbReference type="ChEBI" id="CHEBI:58274"/>
        <dbReference type="ChEBI" id="CHEBI:58349"/>
        <dbReference type="EC" id="1.2.1.41"/>
    </reaction>
</comment>
<comment type="pathway">
    <text evidence="1">Amino-acid biosynthesis; L-proline biosynthesis; L-glutamate 5-semialdehyde from L-glutamate: step 2/2.</text>
</comment>
<comment type="subcellular location">
    <subcellularLocation>
        <location evidence="1">Cytoplasm</location>
    </subcellularLocation>
</comment>
<comment type="similarity">
    <text evidence="1">Belongs to the gamma-glutamyl phosphate reductase family.</text>
</comment>
<gene>
    <name evidence="1" type="primary">proA</name>
    <name type="ordered locus">RPA0164</name>
</gene>
<sequence length="430" mass="45120">MTASLKAIDGSAELTTLMTDLGRQARAAARTLALAPPEQKNRALEAMERAIRAGADKILAANAEDVADAKAAGTTSAFLDRLTLTPARVEAMAEGIAVVRGIADPVGTVTESWQRPNGMTIERVRVPLGVVAVIFESRPNVAADAGVLCLKSGNAVILRGGSESFRSCRAIHDRLVQGLREAGLPDAAITLVPTRDRAAVGLLLAGLDGSVDVIVPRGGKSLVARVESEARVPVFAHLEGVNHVYVDRSADLEMAKSIVLNAKMRRTGVCGAAETLLIDRAAATTHLAPLVTMLIDSGCEVRGDQTVQQVDPRVKPASDEDWDTEYLDAVIAAKLVDGVDGAIVHIHNHGSHHTDAIVAEDAQAAAKFLGEVDSAIVLHNASTQFADGGEFGFGAEIGIATGKFHARGPVGAEQLTTFKYRIHGSGQTRP</sequence>
<organism>
    <name type="scientific">Rhodopseudomonas palustris (strain ATCC BAA-98 / CGA009)</name>
    <dbReference type="NCBI Taxonomy" id="258594"/>
    <lineage>
        <taxon>Bacteria</taxon>
        <taxon>Pseudomonadati</taxon>
        <taxon>Pseudomonadota</taxon>
        <taxon>Alphaproteobacteria</taxon>
        <taxon>Hyphomicrobiales</taxon>
        <taxon>Nitrobacteraceae</taxon>
        <taxon>Rhodopseudomonas</taxon>
    </lineage>
</organism>
<name>PROA_RHOPA</name>
<accession>Q6NDE4</accession>
<keyword id="KW-0028">Amino-acid biosynthesis</keyword>
<keyword id="KW-0963">Cytoplasm</keyword>
<keyword id="KW-0521">NADP</keyword>
<keyword id="KW-0560">Oxidoreductase</keyword>
<keyword id="KW-0641">Proline biosynthesis</keyword>